<dbReference type="EC" id="2.7.11.1" evidence="10"/>
<dbReference type="EMBL" id="AB510402">
    <property type="protein sequence ID" value="BAJ09794.1"/>
    <property type="molecule type" value="mRNA"/>
</dbReference>
<dbReference type="EMBL" id="AP008215">
    <property type="protein sequence ID" value="BAH94662.1"/>
    <property type="status" value="ALT_SEQ"/>
    <property type="molecule type" value="Genomic_DNA"/>
</dbReference>
<dbReference type="EMBL" id="AP014965">
    <property type="protein sequence ID" value="BAT08907.1"/>
    <property type="status" value="ALT_SEQ"/>
    <property type="molecule type" value="Genomic_DNA"/>
</dbReference>
<dbReference type="EMBL" id="AP014965">
    <property type="protein sequence ID" value="BAT08908.1"/>
    <property type="status" value="ALT_SEQ"/>
    <property type="molecule type" value="Genomic_DNA"/>
</dbReference>
<dbReference type="EMBL" id="CM000146">
    <property type="protein sequence ID" value="EAZ45334.1"/>
    <property type="status" value="ALT_SEQ"/>
    <property type="molecule type" value="Genomic_DNA"/>
</dbReference>
<dbReference type="EMBL" id="AK061724">
    <property type="protein sequence ID" value="BAG88070.1"/>
    <property type="molecule type" value="mRNA"/>
</dbReference>
<dbReference type="RefSeq" id="NP_001391829.1">
    <molecule id="D7UPN3-1"/>
    <property type="nucleotide sequence ID" value="NM_001404900.1"/>
</dbReference>
<dbReference type="RefSeq" id="XP_015611968.1">
    <property type="nucleotide sequence ID" value="XM_015756482.1"/>
</dbReference>
<dbReference type="RefSeq" id="XP_066159999.1">
    <molecule id="D7UPN3-1"/>
    <property type="nucleotide sequence ID" value="XM_066303902.1"/>
</dbReference>
<dbReference type="SMR" id="D7UPN3"/>
<dbReference type="FunCoup" id="D7UPN3">
    <property type="interactions" value="563"/>
</dbReference>
<dbReference type="STRING" id="39947.D7UPN3"/>
<dbReference type="GlyCosmos" id="D7UPN3">
    <property type="glycosylation" value="4 sites, No reported glycans"/>
</dbReference>
<dbReference type="PaxDb" id="39947-D7UPN3"/>
<dbReference type="GeneID" id="9270778"/>
<dbReference type="KEGG" id="dosa:Os09g0511000"/>
<dbReference type="eggNOG" id="ENOG502QPX8">
    <property type="taxonomic scope" value="Eukaryota"/>
</dbReference>
<dbReference type="HOGENOM" id="CLU_000288_21_4_1"/>
<dbReference type="InParanoid" id="D7UPN3"/>
<dbReference type="OrthoDB" id="4062651at2759"/>
<dbReference type="Proteomes" id="UP000000763">
    <property type="component" value="Chromosome 9"/>
</dbReference>
<dbReference type="Proteomes" id="UP000007752">
    <property type="component" value="Chromosome 9"/>
</dbReference>
<dbReference type="Proteomes" id="UP000059680">
    <property type="component" value="Chromosome 9"/>
</dbReference>
<dbReference type="GO" id="GO:0005886">
    <property type="term" value="C:plasma membrane"/>
    <property type="evidence" value="ECO:0007669"/>
    <property type="project" value="UniProtKB-SubCell"/>
</dbReference>
<dbReference type="GO" id="GO:0005524">
    <property type="term" value="F:ATP binding"/>
    <property type="evidence" value="ECO:0007669"/>
    <property type="project" value="UniProtKB-KW"/>
</dbReference>
<dbReference type="GO" id="GO:0008061">
    <property type="term" value="F:chitin binding"/>
    <property type="evidence" value="ECO:0000314"/>
    <property type="project" value="UniProtKB"/>
</dbReference>
<dbReference type="GO" id="GO:0106310">
    <property type="term" value="F:protein serine kinase activity"/>
    <property type="evidence" value="ECO:0007669"/>
    <property type="project" value="RHEA"/>
</dbReference>
<dbReference type="GO" id="GO:0004674">
    <property type="term" value="F:protein serine/threonine kinase activity"/>
    <property type="evidence" value="ECO:0007669"/>
    <property type="project" value="UniProtKB-KW"/>
</dbReference>
<dbReference type="GO" id="GO:0019199">
    <property type="term" value="F:transmembrane receptor protein kinase activity"/>
    <property type="evidence" value="ECO:0007669"/>
    <property type="project" value="InterPro"/>
</dbReference>
<dbReference type="GO" id="GO:0045087">
    <property type="term" value="P:innate immune response"/>
    <property type="evidence" value="ECO:0007669"/>
    <property type="project" value="InterPro"/>
</dbReference>
<dbReference type="GO" id="GO:0010200">
    <property type="term" value="P:response to chitin"/>
    <property type="evidence" value="ECO:0000314"/>
    <property type="project" value="UniProtKB"/>
</dbReference>
<dbReference type="FunFam" id="3.30.200.20:FF:000468">
    <property type="entry name" value="LysM receptor kinase 2"/>
    <property type="match status" value="1"/>
</dbReference>
<dbReference type="FunFam" id="1.10.510.10:FF:000468">
    <property type="entry name" value="PTI1-like tyrosine-protein kinase 3"/>
    <property type="match status" value="1"/>
</dbReference>
<dbReference type="Gene3D" id="3.30.200.20">
    <property type="entry name" value="Phosphorylase Kinase, domain 1"/>
    <property type="match status" value="1"/>
</dbReference>
<dbReference type="Gene3D" id="1.10.510.10">
    <property type="entry name" value="Transferase(Phosphotransferase) domain 1"/>
    <property type="match status" value="1"/>
</dbReference>
<dbReference type="InterPro" id="IPR044812">
    <property type="entry name" value="CERK1/LYK3-like"/>
</dbReference>
<dbReference type="InterPro" id="IPR011009">
    <property type="entry name" value="Kinase-like_dom_sf"/>
</dbReference>
<dbReference type="InterPro" id="IPR000719">
    <property type="entry name" value="Prot_kinase_dom"/>
</dbReference>
<dbReference type="InterPro" id="IPR017441">
    <property type="entry name" value="Protein_kinase_ATP_BS"/>
</dbReference>
<dbReference type="InterPro" id="IPR001245">
    <property type="entry name" value="Ser-Thr/Tyr_kinase_cat_dom"/>
</dbReference>
<dbReference type="InterPro" id="IPR008271">
    <property type="entry name" value="Ser/Thr_kinase_AS"/>
</dbReference>
<dbReference type="PANTHER" id="PTHR46204">
    <property type="entry name" value="CHITIN ELICITOR RECEPTOR KINASE 1-RELATED"/>
    <property type="match status" value="1"/>
</dbReference>
<dbReference type="PANTHER" id="PTHR46204:SF4">
    <property type="entry name" value="LYSM DOMAIN RECEPTOR-LIKE KINASE 10"/>
    <property type="match status" value="1"/>
</dbReference>
<dbReference type="Pfam" id="PF23577">
    <property type="entry name" value="LysM_RLK"/>
    <property type="match status" value="1"/>
</dbReference>
<dbReference type="Pfam" id="PF07714">
    <property type="entry name" value="PK_Tyr_Ser-Thr"/>
    <property type="match status" value="1"/>
</dbReference>
<dbReference type="SMART" id="SM00220">
    <property type="entry name" value="S_TKc"/>
    <property type="match status" value="1"/>
</dbReference>
<dbReference type="SUPFAM" id="SSF56112">
    <property type="entry name" value="Protein kinase-like (PK-like)"/>
    <property type="match status" value="1"/>
</dbReference>
<dbReference type="PROSITE" id="PS00107">
    <property type="entry name" value="PROTEIN_KINASE_ATP"/>
    <property type="match status" value="1"/>
</dbReference>
<dbReference type="PROSITE" id="PS50011">
    <property type="entry name" value="PROTEIN_KINASE_DOM"/>
    <property type="match status" value="1"/>
</dbReference>
<dbReference type="PROSITE" id="PS00108">
    <property type="entry name" value="PROTEIN_KINASE_ST"/>
    <property type="match status" value="1"/>
</dbReference>
<sequence length="605" mass="65205">MFSLPALLIGACAFAAAAVAASGDGCRAGCSLAIAAYYFSEGSNLTFIATIFAIGGGGYQALLPYNPAITNPDYVVTGDRVLVPFPCSCLGLPAAPASTFLAGAIPYPLPLPRGGGDTYDAVAANYADLTTAAWLEATNAYPPGRIPGGDGRVNVTINCSCGDERVSPRYGLFLTYPLWDGETLESVAAQYGFSSPAEMELIRRYNPGMGGVSGKGIVFIPVKDPNGSYHPLKSGGMGNSLSGGAIAGIVIACIAIFIVAIWLIIMFYRWQKFRKATSRPSPEETSHLDDASQAEGIKVERSIEFSYEEIFNATQGFSMEHKIGQGGFGSVYYAELRGEKTAIKKMGMQATQEFLAELKVLTHVHHLNLVRLIGYCVENCLFLVYEFIDNGNLSQHLQRTGYAPLSWATRVQIALDSARGLEYLHEHVVPVYVHRDIKSANILLDKDFRAKIADFGLAKLTEVGSMSQSLSTRVAGTFGYMPPEARYGEVSPKVDVYAFGVVLYELLSAKQAIVRSSESVSESKGLVFLFEEALSAPNPTEALDELIDPSLQGDYPVDSALKIASLAKSCTHEEPGMRPTMRSVVVALMALTANTDLRDMDYHPF</sequence>
<keyword id="KW-0025">Alternative splicing</keyword>
<keyword id="KW-0067">ATP-binding</keyword>
<keyword id="KW-1003">Cell membrane</keyword>
<keyword id="KW-0147">Chitin-binding</keyword>
<keyword id="KW-1015">Disulfide bond</keyword>
<keyword id="KW-0325">Glycoprotein</keyword>
<keyword id="KW-0418">Kinase</keyword>
<keyword id="KW-0472">Membrane</keyword>
<keyword id="KW-0547">Nucleotide-binding</keyword>
<keyword id="KW-0597">Phosphoprotein</keyword>
<keyword id="KW-0611">Plant defense</keyword>
<keyword id="KW-0675">Receptor</keyword>
<keyword id="KW-1185">Reference proteome</keyword>
<keyword id="KW-0723">Serine/threonine-protein kinase</keyword>
<keyword id="KW-0732">Signal</keyword>
<keyword id="KW-0808">Transferase</keyword>
<keyword id="KW-0812">Transmembrane</keyword>
<keyword id="KW-1133">Transmembrane helix</keyword>
<gene>
    <name evidence="9" type="primary">RLK10</name>
    <name evidence="8" type="synonym">RLCK276</name>
    <name evidence="11" type="ordered locus">Os09g0511000</name>
    <name evidence="10" type="ordered locus">LOC_Os09g33630</name>
    <name evidence="12" type="ORF">OsJ_29979</name>
</gene>
<protein>
    <recommendedName>
        <fullName evidence="9">LysM domain receptor-like kinase 10</fullName>
        <shortName evidence="9">OsLysM-RLK10</shortName>
        <ecNumber evidence="10">2.7.11.1</ecNumber>
    </recommendedName>
    <alternativeName>
        <fullName evidence="10">LysM-containing receptor-like kinase 10</fullName>
    </alternativeName>
    <alternativeName>
        <fullName evidence="8">Receptor-like cytoplasmic kinase 276</fullName>
        <shortName evidence="8">OsRLCK276</shortName>
    </alternativeName>
</protein>
<proteinExistence type="evidence at transcript level"/>
<accession>D7UPN3</accession>
<accession>A0A0P0XNY3</accession>
<accession>A0A0P0XPR6</accession>
<accession>A3C0J5</accession>
<accession>B7E6S3</accession>
<accession>C7J6F9</accession>
<organism>
    <name type="scientific">Oryza sativa subsp. japonica</name>
    <name type="common">Rice</name>
    <dbReference type="NCBI Taxonomy" id="39947"/>
    <lineage>
        <taxon>Eukaryota</taxon>
        <taxon>Viridiplantae</taxon>
        <taxon>Streptophyta</taxon>
        <taxon>Embryophyta</taxon>
        <taxon>Tracheophyta</taxon>
        <taxon>Spermatophyta</taxon>
        <taxon>Magnoliopsida</taxon>
        <taxon>Liliopsida</taxon>
        <taxon>Poales</taxon>
        <taxon>Poaceae</taxon>
        <taxon>BOP clade</taxon>
        <taxon>Oryzoideae</taxon>
        <taxon>Oryzeae</taxon>
        <taxon>Oryzinae</taxon>
        <taxon>Oryza</taxon>
        <taxon>Oryza sativa</taxon>
    </lineage>
</organism>
<feature type="signal peptide" evidence="3">
    <location>
        <begin position="1"/>
        <end position="20"/>
    </location>
</feature>
<feature type="chain" id="PRO_0000420827" description="LysM domain receptor-like kinase 10">
    <location>
        <begin position="21"/>
        <end position="605"/>
    </location>
</feature>
<feature type="topological domain" description="Extracellular" evidence="3">
    <location>
        <begin position="21"/>
        <end position="245"/>
    </location>
</feature>
<feature type="transmembrane region" description="Helical" evidence="3">
    <location>
        <begin position="246"/>
        <end position="266"/>
    </location>
</feature>
<feature type="topological domain" description="Cytoplasmic" evidence="3">
    <location>
        <begin position="267"/>
        <end position="605"/>
    </location>
</feature>
<feature type="domain" description="LysM" evidence="5">
    <location>
        <begin position="174"/>
        <end position="221"/>
    </location>
</feature>
<feature type="domain" description="Protein kinase" evidence="4">
    <location>
        <begin position="317"/>
        <end position="591"/>
    </location>
</feature>
<feature type="active site" description="Proton acceptor" evidence="4 6">
    <location>
        <position position="436"/>
    </location>
</feature>
<feature type="binding site" evidence="1">
    <location>
        <begin position="115"/>
        <end position="121"/>
    </location>
    <ligand>
        <name>chitin</name>
        <dbReference type="ChEBI" id="CHEBI:17029"/>
    </ligand>
</feature>
<feature type="binding site" evidence="1">
    <location>
        <begin position="142"/>
        <end position="148"/>
    </location>
    <ligand>
        <name>chitin</name>
        <dbReference type="ChEBI" id="CHEBI:17029"/>
    </ligand>
</feature>
<feature type="binding site" evidence="4">
    <location>
        <begin position="323"/>
        <end position="331"/>
    </location>
    <ligand>
        <name>ATP</name>
        <dbReference type="ChEBI" id="CHEBI:30616"/>
    </ligand>
</feature>
<feature type="binding site" evidence="4">
    <location>
        <position position="344"/>
    </location>
    <ligand>
        <name>ATP</name>
        <dbReference type="ChEBI" id="CHEBI:30616"/>
    </ligand>
</feature>
<feature type="modified residue" description="Phosphoserine" evidence="1">
    <location>
        <position position="278"/>
    </location>
</feature>
<feature type="glycosylation site" description="N-linked (GlcNAc...) asparagine" evidence="3">
    <location>
        <position position="44"/>
    </location>
</feature>
<feature type="glycosylation site" description="N-linked (GlcNAc...) asparagine" evidence="3">
    <location>
        <position position="154"/>
    </location>
</feature>
<feature type="glycosylation site" description="N-linked (GlcNAc...) asparagine" evidence="3">
    <location>
        <position position="158"/>
    </location>
</feature>
<feature type="glycosylation site" description="N-linked (GlcNAc...) asparagine" evidence="3">
    <location>
        <position position="226"/>
    </location>
</feature>
<feature type="disulfide bond" evidence="2">
    <location>
        <begin position="26"/>
        <end position="89"/>
    </location>
</feature>
<feature type="disulfide bond" evidence="2">
    <location>
        <begin position="30"/>
        <end position="161"/>
    </location>
</feature>
<feature type="disulfide bond" evidence="2">
    <location>
        <begin position="87"/>
        <end position="159"/>
    </location>
</feature>
<feature type="splice variant" id="VSP_044681" description="In isoform 2." evidence="7">
    <location>
        <begin position="1"/>
        <end position="318"/>
    </location>
</feature>
<comment type="catalytic activity">
    <reaction>
        <text>L-seryl-[protein] + ATP = O-phospho-L-seryl-[protein] + ADP + H(+)</text>
        <dbReference type="Rhea" id="RHEA:17989"/>
        <dbReference type="Rhea" id="RHEA-COMP:9863"/>
        <dbReference type="Rhea" id="RHEA-COMP:11604"/>
        <dbReference type="ChEBI" id="CHEBI:15378"/>
        <dbReference type="ChEBI" id="CHEBI:29999"/>
        <dbReference type="ChEBI" id="CHEBI:30616"/>
        <dbReference type="ChEBI" id="CHEBI:83421"/>
        <dbReference type="ChEBI" id="CHEBI:456216"/>
        <dbReference type="EC" id="2.7.11.1"/>
    </reaction>
</comment>
<comment type="catalytic activity">
    <reaction>
        <text>L-threonyl-[protein] + ATP = O-phospho-L-threonyl-[protein] + ADP + H(+)</text>
        <dbReference type="Rhea" id="RHEA:46608"/>
        <dbReference type="Rhea" id="RHEA-COMP:11060"/>
        <dbReference type="Rhea" id="RHEA-COMP:11605"/>
        <dbReference type="ChEBI" id="CHEBI:15378"/>
        <dbReference type="ChEBI" id="CHEBI:30013"/>
        <dbReference type="ChEBI" id="CHEBI:30616"/>
        <dbReference type="ChEBI" id="CHEBI:61977"/>
        <dbReference type="ChEBI" id="CHEBI:456216"/>
        <dbReference type="EC" id="2.7.11.1"/>
    </reaction>
</comment>
<comment type="subcellular location">
    <subcellularLocation>
        <location evidence="1">Cell membrane</location>
        <topology evidence="1">Single-pass membrane protein</topology>
    </subcellularLocation>
</comment>
<comment type="alternative products">
    <event type="alternative splicing"/>
    <isoform>
        <id>D7UPN3-1</id>
        <name>1</name>
        <sequence type="displayed"/>
    </isoform>
    <isoform>
        <id>D7UPN3-2</id>
        <name>2</name>
        <sequence type="described" ref="VSP_044681"/>
    </isoform>
</comment>
<comment type="similarity">
    <text evidence="4">Belongs to the protein kinase superfamily. Ser/Thr protein kinase family.</text>
</comment>
<comment type="sequence caution" evidence="10">
    <conflict type="erroneous gene model prediction">
        <sequence resource="EMBL-CDS" id="BAH94662"/>
    </conflict>
</comment>
<comment type="sequence caution" evidence="10">
    <conflict type="erroneous gene model prediction">
        <sequence resource="EMBL-CDS" id="BAT08907"/>
    </conflict>
</comment>
<comment type="sequence caution" evidence="10">
    <conflict type="erroneous gene model prediction">
        <sequence resource="EMBL-CDS" id="BAT08908"/>
    </conflict>
</comment>
<comment type="sequence caution" evidence="10">
    <conflict type="erroneous gene model prediction">
        <sequence resource="EMBL-CDS" id="EAZ45334"/>
    </conflict>
</comment>
<name>RLK10_ORYSJ</name>
<reference key="1">
    <citation type="journal article" date="2010" name="Plant J.">
        <title>Two LysM receptor molecules, CEBiP and OsCERK1, cooperatively regulate chitin elicitor signaling in rice.</title>
        <authorList>
            <person name="Shimizu T."/>
            <person name="Nakano T."/>
            <person name="Takamizawa D."/>
            <person name="Desaki Y."/>
            <person name="Ishii-Minami N."/>
            <person name="Nishizawa Y."/>
            <person name="Minami E."/>
            <person name="Okada K."/>
            <person name="Yamane H."/>
            <person name="Kaku H."/>
            <person name="Shibuya N."/>
        </authorList>
    </citation>
    <scope>NUCLEOTIDE SEQUENCE [MRNA] (ISOFORM 1)</scope>
    <source>
        <strain>cv. Nipponbare</strain>
    </source>
</reference>
<reference key="2">
    <citation type="journal article" date="2005" name="Nature">
        <title>The map-based sequence of the rice genome.</title>
        <authorList>
            <consortium name="International rice genome sequencing project (IRGSP)"/>
        </authorList>
    </citation>
    <scope>NUCLEOTIDE SEQUENCE [LARGE SCALE GENOMIC DNA]</scope>
    <source>
        <strain>cv. Nipponbare</strain>
    </source>
</reference>
<reference key="3">
    <citation type="journal article" date="2008" name="Nucleic Acids Res.">
        <title>The rice annotation project database (RAP-DB): 2008 update.</title>
        <authorList>
            <consortium name="The rice annotation project (RAP)"/>
        </authorList>
    </citation>
    <scope>GENOME REANNOTATION</scope>
    <source>
        <strain>cv. Nipponbare</strain>
    </source>
</reference>
<reference key="4">
    <citation type="journal article" date="2013" name="Rice">
        <title>Improvement of the Oryza sativa Nipponbare reference genome using next generation sequence and optical map data.</title>
        <authorList>
            <person name="Kawahara Y."/>
            <person name="de la Bastide M."/>
            <person name="Hamilton J.P."/>
            <person name="Kanamori H."/>
            <person name="McCombie W.R."/>
            <person name="Ouyang S."/>
            <person name="Schwartz D.C."/>
            <person name="Tanaka T."/>
            <person name="Wu J."/>
            <person name="Zhou S."/>
            <person name="Childs K.L."/>
            <person name="Davidson R.M."/>
            <person name="Lin H."/>
            <person name="Quesada-Ocampo L."/>
            <person name="Vaillancourt B."/>
            <person name="Sakai H."/>
            <person name="Lee S.S."/>
            <person name="Kim J."/>
            <person name="Numa H."/>
            <person name="Itoh T."/>
            <person name="Buell C.R."/>
            <person name="Matsumoto T."/>
        </authorList>
    </citation>
    <scope>GENOME REANNOTATION</scope>
    <source>
        <strain>cv. Nipponbare</strain>
    </source>
</reference>
<reference key="5">
    <citation type="journal article" date="2005" name="PLoS Biol.">
        <title>The genomes of Oryza sativa: a history of duplications.</title>
        <authorList>
            <person name="Yu J."/>
            <person name="Wang J."/>
            <person name="Lin W."/>
            <person name="Li S."/>
            <person name="Li H."/>
            <person name="Zhou J."/>
            <person name="Ni P."/>
            <person name="Dong W."/>
            <person name="Hu S."/>
            <person name="Zeng C."/>
            <person name="Zhang J."/>
            <person name="Zhang Y."/>
            <person name="Li R."/>
            <person name="Xu Z."/>
            <person name="Li S."/>
            <person name="Li X."/>
            <person name="Zheng H."/>
            <person name="Cong L."/>
            <person name="Lin L."/>
            <person name="Yin J."/>
            <person name="Geng J."/>
            <person name="Li G."/>
            <person name="Shi J."/>
            <person name="Liu J."/>
            <person name="Lv H."/>
            <person name="Li J."/>
            <person name="Wang J."/>
            <person name="Deng Y."/>
            <person name="Ran L."/>
            <person name="Shi X."/>
            <person name="Wang X."/>
            <person name="Wu Q."/>
            <person name="Li C."/>
            <person name="Ren X."/>
            <person name="Wang J."/>
            <person name="Wang X."/>
            <person name="Li D."/>
            <person name="Liu D."/>
            <person name="Zhang X."/>
            <person name="Ji Z."/>
            <person name="Zhao W."/>
            <person name="Sun Y."/>
            <person name="Zhang Z."/>
            <person name="Bao J."/>
            <person name="Han Y."/>
            <person name="Dong L."/>
            <person name="Ji J."/>
            <person name="Chen P."/>
            <person name="Wu S."/>
            <person name="Liu J."/>
            <person name="Xiao Y."/>
            <person name="Bu D."/>
            <person name="Tan J."/>
            <person name="Yang L."/>
            <person name="Ye C."/>
            <person name="Zhang J."/>
            <person name="Xu J."/>
            <person name="Zhou Y."/>
            <person name="Yu Y."/>
            <person name="Zhang B."/>
            <person name="Zhuang S."/>
            <person name="Wei H."/>
            <person name="Liu B."/>
            <person name="Lei M."/>
            <person name="Yu H."/>
            <person name="Li Y."/>
            <person name="Xu H."/>
            <person name="Wei S."/>
            <person name="He X."/>
            <person name="Fang L."/>
            <person name="Zhang Z."/>
            <person name="Zhang Y."/>
            <person name="Huang X."/>
            <person name="Su Z."/>
            <person name="Tong W."/>
            <person name="Li J."/>
            <person name="Tong Z."/>
            <person name="Li S."/>
            <person name="Ye J."/>
            <person name="Wang L."/>
            <person name="Fang L."/>
            <person name="Lei T."/>
            <person name="Chen C.-S."/>
            <person name="Chen H.-C."/>
            <person name="Xu Z."/>
            <person name="Li H."/>
            <person name="Huang H."/>
            <person name="Zhang F."/>
            <person name="Xu H."/>
            <person name="Li N."/>
            <person name="Zhao C."/>
            <person name="Li S."/>
            <person name="Dong L."/>
            <person name="Huang Y."/>
            <person name="Li L."/>
            <person name="Xi Y."/>
            <person name="Qi Q."/>
            <person name="Li W."/>
            <person name="Zhang B."/>
            <person name="Hu W."/>
            <person name="Zhang Y."/>
            <person name="Tian X."/>
            <person name="Jiao Y."/>
            <person name="Liang X."/>
            <person name="Jin J."/>
            <person name="Gao L."/>
            <person name="Zheng W."/>
            <person name="Hao B."/>
            <person name="Liu S.-M."/>
            <person name="Wang W."/>
            <person name="Yuan L."/>
            <person name="Cao M."/>
            <person name="McDermott J."/>
            <person name="Samudrala R."/>
            <person name="Wang J."/>
            <person name="Wong G.K.-S."/>
            <person name="Yang H."/>
        </authorList>
    </citation>
    <scope>NUCLEOTIDE SEQUENCE [LARGE SCALE GENOMIC DNA]</scope>
    <source>
        <strain>cv. Nipponbare</strain>
    </source>
</reference>
<reference key="6">
    <citation type="journal article" date="2003" name="Science">
        <title>Collection, mapping, and annotation of over 28,000 cDNA clones from japonica rice.</title>
        <authorList>
            <consortium name="The rice full-length cDNA consortium"/>
        </authorList>
    </citation>
    <scope>NUCLEOTIDE SEQUENCE [LARGE SCALE MRNA] (ISOFORM 2)</scope>
    <source>
        <strain>cv. Nipponbare</strain>
    </source>
</reference>
<reference key="7">
    <citation type="journal article" date="2008" name="Mol. Plant">
        <title>The receptor-like cytoplasmic kinase (OsRLCK) gene family in rice: organization, phylogenetic relationship, and expression during development and stress.</title>
        <authorList>
            <person name="Vij S."/>
            <person name="Giri J."/>
            <person name="Dansana P.K."/>
            <person name="Kapoor S."/>
            <person name="Tyagi A.K."/>
        </authorList>
    </citation>
    <scope>GENE FAMILY</scope>
    <scope>NOMENCLATURE</scope>
</reference>
<evidence type="ECO:0000250" key="1"/>
<evidence type="ECO:0000250" key="2">
    <source>
        <dbReference type="UniProtKB" id="A8R7E6"/>
    </source>
</evidence>
<evidence type="ECO:0000255" key="3"/>
<evidence type="ECO:0000255" key="4">
    <source>
        <dbReference type="PROSITE-ProRule" id="PRU00159"/>
    </source>
</evidence>
<evidence type="ECO:0000255" key="5">
    <source>
        <dbReference type="PROSITE-ProRule" id="PRU01118"/>
    </source>
</evidence>
<evidence type="ECO:0000255" key="6">
    <source>
        <dbReference type="PROSITE-ProRule" id="PRU10027"/>
    </source>
</evidence>
<evidence type="ECO:0000303" key="7">
    <source>
    </source>
</evidence>
<evidence type="ECO:0000303" key="8">
    <source>
    </source>
</evidence>
<evidence type="ECO:0000303" key="9">
    <source>
    </source>
</evidence>
<evidence type="ECO:0000305" key="10"/>
<evidence type="ECO:0000312" key="11">
    <source>
        <dbReference type="EMBL" id="BAT08907.1"/>
    </source>
</evidence>
<evidence type="ECO:0000312" key="12">
    <source>
        <dbReference type="EMBL" id="EAZ45334.1"/>
    </source>
</evidence>